<accession>A0A2Y9HKE5</accession>
<feature type="signal peptide" evidence="3">
    <location>
        <begin position="1"/>
        <end position="20"/>
    </location>
</feature>
<feature type="chain" id="PRO_5015986864" description="Apolipoprotein A-V">
    <location>
        <begin position="21"/>
        <end position="367"/>
    </location>
</feature>
<feature type="region of interest" description="Disordered" evidence="4">
    <location>
        <begin position="71"/>
        <end position="90"/>
    </location>
</feature>
<feature type="modified residue" description="Phosphoserine" evidence="1">
    <location>
        <position position="56"/>
    </location>
</feature>
<evidence type="ECO:0000250" key="1">
    <source>
        <dbReference type="UniProtKB" id="Q6Q788"/>
    </source>
</evidence>
<evidence type="ECO:0000250" key="2">
    <source>
        <dbReference type="UniProtKB" id="Q8C7G5"/>
    </source>
</evidence>
<evidence type="ECO:0000255" key="3"/>
<evidence type="ECO:0000256" key="4">
    <source>
        <dbReference type="SAM" id="MobiDB-lite"/>
    </source>
</evidence>
<evidence type="ECO:0000305" key="5"/>
<proteinExistence type="inferred from homology"/>
<organism>
    <name type="scientific">Neomonachus schauinslandi</name>
    <name type="common">Hawaiian monk seal</name>
    <name type="synonym">Monachus schauinslandi</name>
    <dbReference type="NCBI Taxonomy" id="29088"/>
    <lineage>
        <taxon>Eukaryota</taxon>
        <taxon>Metazoa</taxon>
        <taxon>Chordata</taxon>
        <taxon>Craniata</taxon>
        <taxon>Vertebrata</taxon>
        <taxon>Euteleostomi</taxon>
        <taxon>Mammalia</taxon>
        <taxon>Eutheria</taxon>
        <taxon>Laurasiatheria</taxon>
        <taxon>Carnivora</taxon>
        <taxon>Caniformia</taxon>
        <taxon>Pinnipedia</taxon>
        <taxon>Phocidae</taxon>
        <taxon>Monachinae</taxon>
        <taxon>Monachini</taxon>
        <taxon>Neomonachus</taxon>
    </lineage>
</organism>
<gene>
    <name type="primary">APOA5</name>
</gene>
<reference key="1">
    <citation type="submission" date="2017-05" db="EMBL/GenBank/DDBJ databases">
        <title>Improved de novo genome assembly: linked-read sequencing combined with optical mapping produce a high quality mammalian genome at relatively low cost.</title>
        <authorList>
            <person name="Mohr D.W."/>
            <person name="Scott A.F."/>
        </authorList>
    </citation>
    <scope>NUCLEOTIDE SEQUENCE [LARGE SCALE GENOMIC DNA]</scope>
    <source>
        <tissue>Blood</tissue>
    </source>
</reference>
<reference key="2">
    <citation type="unpublished observations" date="2019-10">
        <authorList>
            <person name="Puppione D.L."/>
        </authorList>
    </citation>
    <scope>IDENTIFICATION</scope>
</reference>
<sequence>MVAVLTWALALLSAFATVQTQKGFWDYFSQSSGDKSKVARVQQQKLTWEPTSLKDSLEQDLSNMDKFLEKLGPLSGQGREPPGLPHDPEGMRQQLQEELAEVRARLEPYMAEAHQQVGWNLEGLRRQLKPYTVELMEQVARRVQELQEQLRVVGEGTKAQLLGGVDEARGLLQELQTRVVQHTGRVRELFHPYAQRLVTGIGRHVQELHRSVAPHAAASSARLSRCVQTLSRKLTLKAEALHARIQQNLGQLREELSAFASAGAGGAEEGANPDAQMLSQEVRQRLQAFRHDTFLQIADFTRAIDQETEEVQLQLAPPPPGHSAFAPEFLQADSSEARSKLQARLEDLWEDINDSLHDRGLSHLEEP</sequence>
<name>APOA5_NEOSC</name>
<protein>
    <recommendedName>
        <fullName>Apolipoprotein A-V</fullName>
        <shortName>Apo-AV</shortName>
        <shortName>ApoA-V</shortName>
    </recommendedName>
    <alternativeName>
        <fullName>Apolipoprotein A5</fullName>
    </alternativeName>
</protein>
<dbReference type="EMBL" id="NINY01000000">
    <property type="status" value="NOT_ANNOTATED_CDS"/>
    <property type="molecule type" value="Genomic_DNA"/>
</dbReference>
<dbReference type="RefSeq" id="XP_021552136.1">
    <property type="nucleotide sequence ID" value="XM_021696461.2"/>
</dbReference>
<dbReference type="SMR" id="A0A2Y9HKE5"/>
<dbReference type="GeneID" id="110586259"/>
<dbReference type="InParanoid" id="A0A2Y9HKE5"/>
<dbReference type="Proteomes" id="UP000248481">
    <property type="component" value="Chromosome 11"/>
</dbReference>
<dbReference type="GO" id="GO:0042627">
    <property type="term" value="C:chylomicron"/>
    <property type="evidence" value="ECO:0007669"/>
    <property type="project" value="UniProtKB-KW"/>
</dbReference>
<dbReference type="GO" id="GO:0005769">
    <property type="term" value="C:early endosome"/>
    <property type="evidence" value="ECO:0007669"/>
    <property type="project" value="UniProtKB-SubCell"/>
</dbReference>
<dbReference type="GO" id="GO:1903561">
    <property type="term" value="C:extracellular vesicle"/>
    <property type="evidence" value="ECO:0007669"/>
    <property type="project" value="TreeGrafter"/>
</dbReference>
<dbReference type="GO" id="GO:0005794">
    <property type="term" value="C:Golgi apparatus"/>
    <property type="evidence" value="ECO:0007669"/>
    <property type="project" value="UniProtKB-SubCell"/>
</dbReference>
<dbReference type="GO" id="GO:0034364">
    <property type="term" value="C:high-density lipoprotein particle"/>
    <property type="evidence" value="ECO:0007669"/>
    <property type="project" value="UniProtKB-KW"/>
</dbReference>
<dbReference type="GO" id="GO:0005770">
    <property type="term" value="C:late endosome"/>
    <property type="evidence" value="ECO:0007669"/>
    <property type="project" value="UniProtKB-SubCell"/>
</dbReference>
<dbReference type="GO" id="GO:0034361">
    <property type="term" value="C:very-low-density lipoprotein particle"/>
    <property type="evidence" value="ECO:0007669"/>
    <property type="project" value="UniProtKB-KW"/>
</dbReference>
<dbReference type="GO" id="GO:0120020">
    <property type="term" value="F:cholesterol transfer activity"/>
    <property type="evidence" value="ECO:0007669"/>
    <property type="project" value="TreeGrafter"/>
</dbReference>
<dbReference type="GO" id="GO:0060228">
    <property type="term" value="F:phosphatidylcholine-sterol O-acyltransferase activator activity"/>
    <property type="evidence" value="ECO:0007669"/>
    <property type="project" value="TreeGrafter"/>
</dbReference>
<dbReference type="GO" id="GO:0005543">
    <property type="term" value="F:phospholipid binding"/>
    <property type="evidence" value="ECO:0007669"/>
    <property type="project" value="TreeGrafter"/>
</dbReference>
<dbReference type="GO" id="GO:0055090">
    <property type="term" value="P:acylglycerol homeostasis"/>
    <property type="evidence" value="ECO:0007669"/>
    <property type="project" value="TreeGrafter"/>
</dbReference>
<dbReference type="GO" id="GO:0033344">
    <property type="term" value="P:cholesterol efflux"/>
    <property type="evidence" value="ECO:0007669"/>
    <property type="project" value="TreeGrafter"/>
</dbReference>
<dbReference type="GO" id="GO:0008203">
    <property type="term" value="P:cholesterol metabolic process"/>
    <property type="evidence" value="ECO:0007669"/>
    <property type="project" value="TreeGrafter"/>
</dbReference>
<dbReference type="GO" id="GO:0042157">
    <property type="term" value="P:lipoprotein metabolic process"/>
    <property type="evidence" value="ECO:0007669"/>
    <property type="project" value="InterPro"/>
</dbReference>
<dbReference type="GO" id="GO:0033700">
    <property type="term" value="P:phospholipid efflux"/>
    <property type="evidence" value="ECO:0007669"/>
    <property type="project" value="TreeGrafter"/>
</dbReference>
<dbReference type="FunFam" id="1.20.120.20:FF:000006">
    <property type="entry name" value="Apolipoprotein A-V"/>
    <property type="match status" value="1"/>
</dbReference>
<dbReference type="FunFam" id="1.20.120.20:FF:000009">
    <property type="entry name" value="apolipoprotein A-V"/>
    <property type="match status" value="1"/>
</dbReference>
<dbReference type="Gene3D" id="1.20.120.20">
    <property type="entry name" value="Apolipoprotein"/>
    <property type="match status" value="2"/>
</dbReference>
<dbReference type="InterPro" id="IPR000074">
    <property type="entry name" value="ApoA_E"/>
</dbReference>
<dbReference type="InterPro" id="IPR050163">
    <property type="entry name" value="Apolipoprotein_A1/A4/E"/>
</dbReference>
<dbReference type="PANTHER" id="PTHR18976">
    <property type="entry name" value="APOLIPOPROTEIN"/>
    <property type="match status" value="1"/>
</dbReference>
<dbReference type="PANTHER" id="PTHR18976:SF13">
    <property type="entry name" value="APOLIPOPROTEIN A-V"/>
    <property type="match status" value="1"/>
</dbReference>
<dbReference type="Pfam" id="PF01442">
    <property type="entry name" value="Apolipoprotein"/>
    <property type="match status" value="1"/>
</dbReference>
<dbReference type="SUPFAM" id="SSF58113">
    <property type="entry name" value="Apolipoprotein A-I"/>
    <property type="match status" value="1"/>
</dbReference>
<comment type="function">
    <text evidence="1 2">Minor apolipoprotein mainly associated with HDL and to a lesser extent with VLDL. May also be associated with chylomicrons (By similarity). Important determinant of plasma triglyceride (TG) levels by both being a potent stimulator of apo-CII lipoprotein lipase (LPL) TG hydrolysis and an inhibitor of the hepatic VLDL-TG production rate (without affecting the VLDL-apoB production rate) (By similarity). Activates poorly lecithin:cholesterol acyltransferase (LCAT) and does not enhance efflux of cholesterol from macrophages (By similarity). Binds heparin (By similarity).</text>
</comment>
<comment type="subunit">
    <text evidence="1">Interacts with GPIHBP1 (By similarity). Interacts with SORL1; this interaction leads to APOA5 internalization and sorting either to lysosomes and degradation, or to the trans-Golgi network (By similarity).</text>
</comment>
<comment type="subcellular location">
    <subcellularLocation>
        <location evidence="1">Secreted</location>
    </subcellularLocation>
    <subcellularLocation>
        <location evidence="1">Early endosome</location>
    </subcellularLocation>
    <subcellularLocation>
        <location evidence="1">Late endosome</location>
    </subcellularLocation>
    <subcellularLocation>
        <location evidence="1">Golgi apparatus</location>
        <location evidence="1">trans-Golgi network</location>
    </subcellularLocation>
    <text evidence="1">In the presence of SORL1, internalized to early endosomes, sorted in a retrograde fashion to late endosomes, from which a portion is sent to lysosomes and degradation, another portion is sorted to the trans-Golgi network.</text>
</comment>
<comment type="PTM">
    <text evidence="1">Phosphorylated by FAM20C in the extracellular medium.</text>
</comment>
<comment type="similarity">
    <text evidence="5">Belongs to the apolipoprotein A1/A4/E family.</text>
</comment>
<keyword id="KW-0162">Chylomicron</keyword>
<keyword id="KW-0175">Coiled coil</keyword>
<keyword id="KW-0967">Endosome</keyword>
<keyword id="KW-0333">Golgi apparatus</keyword>
<keyword id="KW-0345">HDL</keyword>
<keyword id="KW-0445">Lipid transport</keyword>
<keyword id="KW-0597">Phosphoprotein</keyword>
<keyword id="KW-1185">Reference proteome</keyword>
<keyword id="KW-0964">Secreted</keyword>
<keyword id="KW-0732">Signal</keyword>
<keyword id="KW-0813">Transport</keyword>
<keyword id="KW-0850">VLDL</keyword>